<feature type="chain" id="PRO_1000134345" description="2,3-diketo-L-gulonate reductase">
    <location>
        <begin position="1"/>
        <end position="332"/>
    </location>
</feature>
<feature type="active site" description="Proton donor" evidence="1">
    <location>
        <position position="44"/>
    </location>
</feature>
<feature type="binding site" evidence="1">
    <location>
        <begin position="168"/>
        <end position="174"/>
    </location>
    <ligand>
        <name>NAD(+)</name>
        <dbReference type="ChEBI" id="CHEBI:57540"/>
    </ligand>
</feature>
<feature type="binding site" evidence="1">
    <location>
        <begin position="224"/>
        <end position="225"/>
    </location>
    <ligand>
        <name>NAD(+)</name>
        <dbReference type="ChEBI" id="CHEBI:57540"/>
    </ligand>
</feature>
<feature type="binding site" evidence="1">
    <location>
        <begin position="304"/>
        <end position="306"/>
    </location>
    <ligand>
        <name>NAD(+)</name>
        <dbReference type="ChEBI" id="CHEBI:57540"/>
    </ligand>
</feature>
<accession>B5XMX0</accession>
<comment type="function">
    <text evidence="1">Catalyzes the reduction of 2,3-diketo-L-gulonate in the presence of NADH, to form 3-keto-L-gulonate.</text>
</comment>
<comment type="catalytic activity">
    <reaction evidence="1">
        <text>3-dehydro-L-gulonate + NAD(+) = 2,3-dioxo-L-gulonate + NADH + H(+)</text>
        <dbReference type="Rhea" id="RHEA:21924"/>
        <dbReference type="ChEBI" id="CHEBI:15378"/>
        <dbReference type="ChEBI" id="CHEBI:57441"/>
        <dbReference type="ChEBI" id="CHEBI:57540"/>
        <dbReference type="ChEBI" id="CHEBI:57655"/>
        <dbReference type="ChEBI" id="CHEBI:57945"/>
        <dbReference type="EC" id="1.1.1.130"/>
    </reaction>
</comment>
<comment type="catalytic activity">
    <reaction evidence="1">
        <text>3-dehydro-L-gulonate + NADP(+) = 2,3-dioxo-L-gulonate + NADPH + H(+)</text>
        <dbReference type="Rhea" id="RHEA:21928"/>
        <dbReference type="ChEBI" id="CHEBI:15378"/>
        <dbReference type="ChEBI" id="CHEBI:57441"/>
        <dbReference type="ChEBI" id="CHEBI:57655"/>
        <dbReference type="ChEBI" id="CHEBI:57783"/>
        <dbReference type="ChEBI" id="CHEBI:58349"/>
        <dbReference type="EC" id="1.1.1.130"/>
    </reaction>
</comment>
<comment type="subunit">
    <text evidence="1">Homodimer.</text>
</comment>
<comment type="subcellular location">
    <subcellularLocation>
        <location evidence="1">Cytoplasm</location>
    </subcellularLocation>
</comment>
<comment type="similarity">
    <text evidence="1">Belongs to the LDH2/MDH2 oxidoreductase family. DlgD subfamily.</text>
</comment>
<organism>
    <name type="scientific">Klebsiella pneumoniae (strain 342)</name>
    <dbReference type="NCBI Taxonomy" id="507522"/>
    <lineage>
        <taxon>Bacteria</taxon>
        <taxon>Pseudomonadati</taxon>
        <taxon>Pseudomonadota</taxon>
        <taxon>Gammaproteobacteria</taxon>
        <taxon>Enterobacterales</taxon>
        <taxon>Enterobacteriaceae</taxon>
        <taxon>Klebsiella/Raoultella group</taxon>
        <taxon>Klebsiella</taxon>
        <taxon>Klebsiella pneumoniae complex</taxon>
    </lineage>
</organism>
<sequence>MKVTFSQLKEAFNQVLLKRGVAAETADACADMFARTTESGVYSHGVNRFPRFIQQLDNGDIIPEAKPQRITSLGAIEQWDAQRSIGNLTAKKMMDRAMELASDHGIGLVALRNANHWMRGGSYGWQAAEKGYIGICWTNSIAVMPPWGAKECRIGTNPLIVAIPSTPITMVDMSMSMFSYGMLEVNRLAGRELPVDGGFDDEGNLTKEPGVIEKNRRILPMGYWKGSGLSIVLDMIATLLSNGSSVAEVTQENSDEYGVSQIFIAIEVDKLIDGATRDAKLQRIMDFITTAERADENVAVRLPGHEFTRLLEENRRDGITVDDSVWAKIQAL</sequence>
<gene>
    <name evidence="1" type="primary">dlgD</name>
    <name type="ordered locus">KPK_0166</name>
</gene>
<proteinExistence type="inferred from homology"/>
<protein>
    <recommendedName>
        <fullName evidence="1">2,3-diketo-L-gulonate reductase</fullName>
        <shortName evidence="1">2,3-DKG reductase</shortName>
        <ecNumber evidence="1">1.1.1.130</ecNumber>
    </recommendedName>
    <alternativeName>
        <fullName evidence="1">3-dehydro-L-gulonate 2-dehydrogenase</fullName>
    </alternativeName>
</protein>
<dbReference type="EC" id="1.1.1.130" evidence="1"/>
<dbReference type="EMBL" id="CP000964">
    <property type="protein sequence ID" value="ACI08708.1"/>
    <property type="molecule type" value="Genomic_DNA"/>
</dbReference>
<dbReference type="SMR" id="B5XMX0"/>
<dbReference type="KEGG" id="kpe:KPK_0166"/>
<dbReference type="HOGENOM" id="CLU_040452_4_0_6"/>
<dbReference type="Proteomes" id="UP000001734">
    <property type="component" value="Chromosome"/>
</dbReference>
<dbReference type="GO" id="GO:0005737">
    <property type="term" value="C:cytoplasm"/>
    <property type="evidence" value="ECO:0007669"/>
    <property type="project" value="UniProtKB-SubCell"/>
</dbReference>
<dbReference type="GO" id="GO:0047559">
    <property type="term" value="F:3-dehydro-L-gulonate 2-dehydrogenase activity"/>
    <property type="evidence" value="ECO:0007669"/>
    <property type="project" value="UniProtKB-UniRule"/>
</dbReference>
<dbReference type="GO" id="GO:0070403">
    <property type="term" value="F:NAD+ binding"/>
    <property type="evidence" value="ECO:0007669"/>
    <property type="project" value="InterPro"/>
</dbReference>
<dbReference type="Gene3D" id="1.10.1530.10">
    <property type="match status" value="1"/>
</dbReference>
<dbReference type="Gene3D" id="3.30.1370.60">
    <property type="entry name" value="Hypothetical oxidoreductase yiak, domain 2"/>
    <property type="match status" value="1"/>
</dbReference>
<dbReference type="Gene3D" id="3.30.60.50">
    <property type="entry name" value="Hypothetical oxidoreductase yiak, domain 3"/>
    <property type="match status" value="1"/>
</dbReference>
<dbReference type="HAMAP" id="MF_00820">
    <property type="entry name" value="Diketo_gul_reduc"/>
    <property type="match status" value="1"/>
</dbReference>
<dbReference type="InterPro" id="IPR023689">
    <property type="entry name" value="Diketo_gul_Rdtase"/>
</dbReference>
<dbReference type="InterPro" id="IPR043144">
    <property type="entry name" value="Mal/L-sulf/L-lact_DH-like_ah"/>
</dbReference>
<dbReference type="InterPro" id="IPR043143">
    <property type="entry name" value="Mal/L-sulf/L-lact_DH-like_NADP"/>
</dbReference>
<dbReference type="InterPro" id="IPR036111">
    <property type="entry name" value="Mal/L-sulfo/L-lacto_DH-like_sf"/>
</dbReference>
<dbReference type="InterPro" id="IPR003767">
    <property type="entry name" value="Malate/L-lactate_DH-like"/>
</dbReference>
<dbReference type="NCBIfam" id="NF009750">
    <property type="entry name" value="PRK13260.1"/>
    <property type="match status" value="1"/>
</dbReference>
<dbReference type="PANTHER" id="PTHR11091:SF3">
    <property type="entry name" value="2,3-DIKETO-L-GULONATE REDUCTASE"/>
    <property type="match status" value="1"/>
</dbReference>
<dbReference type="PANTHER" id="PTHR11091">
    <property type="entry name" value="OXIDOREDUCTASE-RELATED"/>
    <property type="match status" value="1"/>
</dbReference>
<dbReference type="Pfam" id="PF02615">
    <property type="entry name" value="Ldh_2"/>
    <property type="match status" value="1"/>
</dbReference>
<dbReference type="SUPFAM" id="SSF89733">
    <property type="entry name" value="L-sulfolactate dehydrogenase-like"/>
    <property type="match status" value="1"/>
</dbReference>
<evidence type="ECO:0000255" key="1">
    <source>
        <dbReference type="HAMAP-Rule" id="MF_00820"/>
    </source>
</evidence>
<keyword id="KW-0963">Cytoplasm</keyword>
<keyword id="KW-0520">NAD</keyword>
<keyword id="KW-0560">Oxidoreductase</keyword>
<reference key="1">
    <citation type="journal article" date="2008" name="PLoS Genet.">
        <title>Complete genome sequence of the N2-fixing broad host range endophyte Klebsiella pneumoniae 342 and virulence predictions verified in mice.</title>
        <authorList>
            <person name="Fouts D.E."/>
            <person name="Tyler H.L."/>
            <person name="DeBoy R.T."/>
            <person name="Daugherty S."/>
            <person name="Ren Q."/>
            <person name="Badger J.H."/>
            <person name="Durkin A.S."/>
            <person name="Huot H."/>
            <person name="Shrivastava S."/>
            <person name="Kothari S."/>
            <person name="Dodson R.J."/>
            <person name="Mohamoud Y."/>
            <person name="Khouri H."/>
            <person name="Roesch L.F.W."/>
            <person name="Krogfelt K.A."/>
            <person name="Struve C."/>
            <person name="Triplett E.W."/>
            <person name="Methe B.A."/>
        </authorList>
    </citation>
    <scope>NUCLEOTIDE SEQUENCE [LARGE SCALE GENOMIC DNA]</scope>
    <source>
        <strain>342</strain>
    </source>
</reference>
<name>DLGD_KLEP3</name>